<proteinExistence type="inferred from homology"/>
<accession>Q21H39</accession>
<protein>
    <recommendedName>
        <fullName evidence="1">4-hydroxy-tetrahydrodipicolinate reductase</fullName>
        <shortName evidence="1">HTPA reductase</shortName>
        <ecNumber evidence="1">1.17.1.8</ecNumber>
    </recommendedName>
</protein>
<evidence type="ECO:0000255" key="1">
    <source>
        <dbReference type="HAMAP-Rule" id="MF_00102"/>
    </source>
</evidence>
<evidence type="ECO:0000305" key="2"/>
<reference key="1">
    <citation type="journal article" date="2008" name="PLoS Genet.">
        <title>Complete genome sequence of the complex carbohydrate-degrading marine bacterium, Saccharophagus degradans strain 2-40 T.</title>
        <authorList>
            <person name="Weiner R.M."/>
            <person name="Taylor L.E. II"/>
            <person name="Henrissat B."/>
            <person name="Hauser L."/>
            <person name="Land M."/>
            <person name="Coutinho P.M."/>
            <person name="Rancurel C."/>
            <person name="Saunders E.H."/>
            <person name="Longmire A.G."/>
            <person name="Zhang H."/>
            <person name="Bayer E.A."/>
            <person name="Gilbert H.J."/>
            <person name="Larimer F."/>
            <person name="Zhulin I.B."/>
            <person name="Ekborg N.A."/>
            <person name="Lamed R."/>
            <person name="Richardson P.M."/>
            <person name="Borovok I."/>
            <person name="Hutcheson S."/>
        </authorList>
    </citation>
    <scope>NUCLEOTIDE SEQUENCE [LARGE SCALE GENOMIC DNA]</scope>
    <source>
        <strain>2-40 / ATCC 43961 / DSM 17024</strain>
    </source>
</reference>
<feature type="chain" id="PRO_1000008630" description="4-hydroxy-tetrahydrodipicolinate reductase">
    <location>
        <begin position="1"/>
        <end position="268"/>
    </location>
</feature>
<feature type="active site" description="Proton donor/acceptor" evidence="1">
    <location>
        <position position="156"/>
    </location>
</feature>
<feature type="active site" description="Proton donor" evidence="1">
    <location>
        <position position="160"/>
    </location>
</feature>
<feature type="binding site" evidence="1">
    <location>
        <begin position="9"/>
        <end position="14"/>
    </location>
    <ligand>
        <name>NAD(+)</name>
        <dbReference type="ChEBI" id="CHEBI:57540"/>
    </ligand>
</feature>
<feature type="binding site" evidence="1">
    <location>
        <begin position="99"/>
        <end position="101"/>
    </location>
    <ligand>
        <name>NAD(+)</name>
        <dbReference type="ChEBI" id="CHEBI:57540"/>
    </ligand>
</feature>
<feature type="binding site" evidence="1">
    <location>
        <begin position="123"/>
        <end position="126"/>
    </location>
    <ligand>
        <name>NAD(+)</name>
        <dbReference type="ChEBI" id="CHEBI:57540"/>
    </ligand>
</feature>
<feature type="binding site" evidence="1">
    <location>
        <position position="157"/>
    </location>
    <ligand>
        <name>(S)-2,3,4,5-tetrahydrodipicolinate</name>
        <dbReference type="ChEBI" id="CHEBI:16845"/>
    </ligand>
</feature>
<feature type="binding site" evidence="1">
    <location>
        <begin position="166"/>
        <end position="167"/>
    </location>
    <ligand>
        <name>(S)-2,3,4,5-tetrahydrodipicolinate</name>
        <dbReference type="ChEBI" id="CHEBI:16845"/>
    </ligand>
</feature>
<organism>
    <name type="scientific">Saccharophagus degradans (strain 2-40 / ATCC 43961 / DSM 17024)</name>
    <dbReference type="NCBI Taxonomy" id="203122"/>
    <lineage>
        <taxon>Bacteria</taxon>
        <taxon>Pseudomonadati</taxon>
        <taxon>Pseudomonadota</taxon>
        <taxon>Gammaproteobacteria</taxon>
        <taxon>Cellvibrionales</taxon>
        <taxon>Cellvibrionaceae</taxon>
        <taxon>Saccharophagus</taxon>
    </lineage>
</organism>
<keyword id="KW-0028">Amino-acid biosynthesis</keyword>
<keyword id="KW-0963">Cytoplasm</keyword>
<keyword id="KW-0220">Diaminopimelate biosynthesis</keyword>
<keyword id="KW-0457">Lysine biosynthesis</keyword>
<keyword id="KW-0520">NAD</keyword>
<keyword id="KW-0521">NADP</keyword>
<keyword id="KW-0560">Oxidoreductase</keyword>
<keyword id="KW-1185">Reference proteome</keyword>
<name>DAPB_SACD2</name>
<dbReference type="EC" id="1.17.1.8" evidence="1"/>
<dbReference type="EMBL" id="CP000282">
    <property type="protein sequence ID" value="ABD81990.1"/>
    <property type="molecule type" value="Genomic_DNA"/>
</dbReference>
<dbReference type="RefSeq" id="WP_011469207.1">
    <property type="nucleotide sequence ID" value="NC_007912.1"/>
</dbReference>
<dbReference type="SMR" id="Q21H39"/>
<dbReference type="STRING" id="203122.Sde_2730"/>
<dbReference type="GeneID" id="98614388"/>
<dbReference type="KEGG" id="sde:Sde_2730"/>
<dbReference type="eggNOG" id="COG0289">
    <property type="taxonomic scope" value="Bacteria"/>
</dbReference>
<dbReference type="HOGENOM" id="CLU_047479_2_1_6"/>
<dbReference type="OrthoDB" id="9790352at2"/>
<dbReference type="UniPathway" id="UPA00034">
    <property type="reaction ID" value="UER00018"/>
</dbReference>
<dbReference type="Proteomes" id="UP000001947">
    <property type="component" value="Chromosome"/>
</dbReference>
<dbReference type="GO" id="GO:0005829">
    <property type="term" value="C:cytosol"/>
    <property type="evidence" value="ECO:0007669"/>
    <property type="project" value="TreeGrafter"/>
</dbReference>
<dbReference type="GO" id="GO:0008839">
    <property type="term" value="F:4-hydroxy-tetrahydrodipicolinate reductase"/>
    <property type="evidence" value="ECO:0007669"/>
    <property type="project" value="UniProtKB-EC"/>
</dbReference>
<dbReference type="GO" id="GO:0051287">
    <property type="term" value="F:NAD binding"/>
    <property type="evidence" value="ECO:0007669"/>
    <property type="project" value="UniProtKB-UniRule"/>
</dbReference>
<dbReference type="GO" id="GO:0050661">
    <property type="term" value="F:NADP binding"/>
    <property type="evidence" value="ECO:0007669"/>
    <property type="project" value="UniProtKB-UniRule"/>
</dbReference>
<dbReference type="GO" id="GO:0016726">
    <property type="term" value="F:oxidoreductase activity, acting on CH or CH2 groups, NAD or NADP as acceptor"/>
    <property type="evidence" value="ECO:0007669"/>
    <property type="project" value="UniProtKB-UniRule"/>
</dbReference>
<dbReference type="GO" id="GO:0019877">
    <property type="term" value="P:diaminopimelate biosynthetic process"/>
    <property type="evidence" value="ECO:0007669"/>
    <property type="project" value="UniProtKB-UniRule"/>
</dbReference>
<dbReference type="GO" id="GO:0009089">
    <property type="term" value="P:lysine biosynthetic process via diaminopimelate"/>
    <property type="evidence" value="ECO:0007669"/>
    <property type="project" value="UniProtKB-UniRule"/>
</dbReference>
<dbReference type="CDD" id="cd02274">
    <property type="entry name" value="DHDPR_N"/>
    <property type="match status" value="1"/>
</dbReference>
<dbReference type="FunFam" id="3.30.360.10:FF:000004">
    <property type="entry name" value="4-hydroxy-tetrahydrodipicolinate reductase"/>
    <property type="match status" value="1"/>
</dbReference>
<dbReference type="FunFam" id="3.40.50.720:FF:000048">
    <property type="entry name" value="4-hydroxy-tetrahydrodipicolinate reductase"/>
    <property type="match status" value="1"/>
</dbReference>
<dbReference type="Gene3D" id="3.30.360.10">
    <property type="entry name" value="Dihydrodipicolinate Reductase, domain 2"/>
    <property type="match status" value="1"/>
</dbReference>
<dbReference type="Gene3D" id="3.40.50.720">
    <property type="entry name" value="NAD(P)-binding Rossmann-like Domain"/>
    <property type="match status" value="1"/>
</dbReference>
<dbReference type="HAMAP" id="MF_00102">
    <property type="entry name" value="DapB"/>
    <property type="match status" value="1"/>
</dbReference>
<dbReference type="InterPro" id="IPR022663">
    <property type="entry name" value="DapB_C"/>
</dbReference>
<dbReference type="InterPro" id="IPR000846">
    <property type="entry name" value="DapB_N"/>
</dbReference>
<dbReference type="InterPro" id="IPR022664">
    <property type="entry name" value="DapB_N_CS"/>
</dbReference>
<dbReference type="InterPro" id="IPR023940">
    <property type="entry name" value="DHDPR_bac"/>
</dbReference>
<dbReference type="InterPro" id="IPR036291">
    <property type="entry name" value="NAD(P)-bd_dom_sf"/>
</dbReference>
<dbReference type="NCBIfam" id="TIGR00036">
    <property type="entry name" value="dapB"/>
    <property type="match status" value="1"/>
</dbReference>
<dbReference type="PANTHER" id="PTHR20836:SF0">
    <property type="entry name" value="4-HYDROXY-TETRAHYDRODIPICOLINATE REDUCTASE 1, CHLOROPLASTIC-RELATED"/>
    <property type="match status" value="1"/>
</dbReference>
<dbReference type="PANTHER" id="PTHR20836">
    <property type="entry name" value="DIHYDRODIPICOLINATE REDUCTASE"/>
    <property type="match status" value="1"/>
</dbReference>
<dbReference type="Pfam" id="PF05173">
    <property type="entry name" value="DapB_C"/>
    <property type="match status" value="1"/>
</dbReference>
<dbReference type="Pfam" id="PF01113">
    <property type="entry name" value="DapB_N"/>
    <property type="match status" value="1"/>
</dbReference>
<dbReference type="PIRSF" id="PIRSF000161">
    <property type="entry name" value="DHPR"/>
    <property type="match status" value="1"/>
</dbReference>
<dbReference type="SUPFAM" id="SSF55347">
    <property type="entry name" value="Glyceraldehyde-3-phosphate dehydrogenase-like, C-terminal domain"/>
    <property type="match status" value="1"/>
</dbReference>
<dbReference type="SUPFAM" id="SSF51735">
    <property type="entry name" value="NAD(P)-binding Rossmann-fold domains"/>
    <property type="match status" value="1"/>
</dbReference>
<dbReference type="PROSITE" id="PS01298">
    <property type="entry name" value="DAPB"/>
    <property type="match status" value="1"/>
</dbReference>
<sequence length="268" mass="27910">MTTRIAVTGAAGRMGKALIEAVCQSEDAVLGAAIVAPDSSLVGADAGELAGVGKQGVAIVNDLSTVVADFDVLIDFTSPSATVANASVCKAHNKPMVVGTTGFSPAEKAAFEADASTVPTCVASNFSTGVNLCFKLLDIAARVMGNDADIEVYEAHHRHKVDAPSGTALRMGEVLANAVNRDLNEVAVYGREGQTGARDRNTIGFATVRGGDVVGDHTVSFMCEGERVEITHKASSRLSFARGAVRAATWLVEKEPKIYDMQDVLGLK</sequence>
<gene>
    <name evidence="1" type="primary">dapB</name>
    <name type="ordered locus">Sde_2730</name>
</gene>
<comment type="function">
    <text evidence="1">Catalyzes the conversion of 4-hydroxy-tetrahydrodipicolinate (HTPA) to tetrahydrodipicolinate.</text>
</comment>
<comment type="catalytic activity">
    <reaction evidence="1">
        <text>(S)-2,3,4,5-tetrahydrodipicolinate + NAD(+) + H2O = (2S,4S)-4-hydroxy-2,3,4,5-tetrahydrodipicolinate + NADH + H(+)</text>
        <dbReference type="Rhea" id="RHEA:35323"/>
        <dbReference type="ChEBI" id="CHEBI:15377"/>
        <dbReference type="ChEBI" id="CHEBI:15378"/>
        <dbReference type="ChEBI" id="CHEBI:16845"/>
        <dbReference type="ChEBI" id="CHEBI:57540"/>
        <dbReference type="ChEBI" id="CHEBI:57945"/>
        <dbReference type="ChEBI" id="CHEBI:67139"/>
        <dbReference type="EC" id="1.17.1.8"/>
    </reaction>
</comment>
<comment type="catalytic activity">
    <reaction evidence="1">
        <text>(S)-2,3,4,5-tetrahydrodipicolinate + NADP(+) + H2O = (2S,4S)-4-hydroxy-2,3,4,5-tetrahydrodipicolinate + NADPH + H(+)</text>
        <dbReference type="Rhea" id="RHEA:35331"/>
        <dbReference type="ChEBI" id="CHEBI:15377"/>
        <dbReference type="ChEBI" id="CHEBI:15378"/>
        <dbReference type="ChEBI" id="CHEBI:16845"/>
        <dbReference type="ChEBI" id="CHEBI:57783"/>
        <dbReference type="ChEBI" id="CHEBI:58349"/>
        <dbReference type="ChEBI" id="CHEBI:67139"/>
        <dbReference type="EC" id="1.17.1.8"/>
    </reaction>
</comment>
<comment type="pathway">
    <text evidence="1">Amino-acid biosynthesis; L-lysine biosynthesis via DAP pathway; (S)-tetrahydrodipicolinate from L-aspartate: step 4/4.</text>
</comment>
<comment type="subcellular location">
    <subcellularLocation>
        <location evidence="1">Cytoplasm</location>
    </subcellularLocation>
</comment>
<comment type="similarity">
    <text evidence="1">Belongs to the DapB family.</text>
</comment>
<comment type="caution">
    <text evidence="2">Was originally thought to be a dihydrodipicolinate reductase (DHDPR), catalyzing the conversion of dihydrodipicolinate to tetrahydrodipicolinate. However, it was shown in E.coli that the substrate of the enzymatic reaction is not dihydrodipicolinate (DHDP) but in fact (2S,4S)-4-hydroxy-2,3,4,5-tetrahydrodipicolinic acid (HTPA), the product released by the DapA-catalyzed reaction.</text>
</comment>